<comment type="subcellular location">
    <subcellularLocation>
        <location>Secreted</location>
    </subcellularLocation>
</comment>
<comment type="similarity">
    <text evidence="2">Belongs to the somatotropin/prolactin family.</text>
</comment>
<accession>P14059</accession>
<dbReference type="EMBL" id="M27146">
    <property type="protein sequence ID" value="AAA37088.1"/>
    <property type="molecule type" value="mRNA"/>
</dbReference>
<dbReference type="PIR" id="A41407">
    <property type="entry name" value="A41407"/>
</dbReference>
<dbReference type="SMR" id="P14059"/>
<dbReference type="STRING" id="10036.ENSMAUP00000002735"/>
<dbReference type="GeneID" id="101842847"/>
<dbReference type="KEGG" id="maua:101842847"/>
<dbReference type="eggNOG" id="ENOG502QYU3">
    <property type="taxonomic scope" value="Eukaryota"/>
</dbReference>
<dbReference type="OrthoDB" id="9946219at2759"/>
<dbReference type="Proteomes" id="UP000189706">
    <property type="component" value="Unplaced"/>
</dbReference>
<dbReference type="GO" id="GO:0005615">
    <property type="term" value="C:extracellular space"/>
    <property type="evidence" value="ECO:0007669"/>
    <property type="project" value="TreeGrafter"/>
</dbReference>
<dbReference type="GO" id="GO:0005179">
    <property type="term" value="F:hormone activity"/>
    <property type="evidence" value="ECO:0007669"/>
    <property type="project" value="UniProtKB-KW"/>
</dbReference>
<dbReference type="GO" id="GO:0005148">
    <property type="term" value="F:prolactin receptor binding"/>
    <property type="evidence" value="ECO:0007669"/>
    <property type="project" value="TreeGrafter"/>
</dbReference>
<dbReference type="GO" id="GO:0007565">
    <property type="term" value="P:female pregnancy"/>
    <property type="evidence" value="ECO:0007669"/>
    <property type="project" value="TreeGrafter"/>
</dbReference>
<dbReference type="GO" id="GO:0030879">
    <property type="term" value="P:mammary gland development"/>
    <property type="evidence" value="ECO:0007669"/>
    <property type="project" value="TreeGrafter"/>
</dbReference>
<dbReference type="GO" id="GO:0008284">
    <property type="term" value="P:positive regulation of cell population proliferation"/>
    <property type="evidence" value="ECO:0007669"/>
    <property type="project" value="TreeGrafter"/>
</dbReference>
<dbReference type="GO" id="GO:1903489">
    <property type="term" value="P:positive regulation of lactation"/>
    <property type="evidence" value="ECO:0007669"/>
    <property type="project" value="TreeGrafter"/>
</dbReference>
<dbReference type="GO" id="GO:0046427">
    <property type="term" value="P:positive regulation of receptor signaling pathway via JAK-STAT"/>
    <property type="evidence" value="ECO:0007669"/>
    <property type="project" value="TreeGrafter"/>
</dbReference>
<dbReference type="GO" id="GO:0031667">
    <property type="term" value="P:response to nutrient levels"/>
    <property type="evidence" value="ECO:0007669"/>
    <property type="project" value="TreeGrafter"/>
</dbReference>
<dbReference type="CDD" id="cd10288">
    <property type="entry name" value="prolactin_like"/>
    <property type="match status" value="1"/>
</dbReference>
<dbReference type="Gene3D" id="1.20.1250.10">
    <property type="match status" value="1"/>
</dbReference>
<dbReference type="InterPro" id="IPR009079">
    <property type="entry name" value="4_helix_cytokine-like_core"/>
</dbReference>
<dbReference type="InterPro" id="IPR001400">
    <property type="entry name" value="Somatotropin/Prolactin"/>
</dbReference>
<dbReference type="InterPro" id="IPR018116">
    <property type="entry name" value="Somatotropin_CS"/>
</dbReference>
<dbReference type="PANTHER" id="PTHR11417:SF37">
    <property type="entry name" value="PROLACTIN-3B1"/>
    <property type="match status" value="1"/>
</dbReference>
<dbReference type="PANTHER" id="PTHR11417">
    <property type="entry name" value="SOMATOTROPIN,PROLACTIN"/>
    <property type="match status" value="1"/>
</dbReference>
<dbReference type="Pfam" id="PF00103">
    <property type="entry name" value="Hormone_1"/>
    <property type="match status" value="1"/>
</dbReference>
<dbReference type="PRINTS" id="PR00836">
    <property type="entry name" value="SOMATOTROPIN"/>
</dbReference>
<dbReference type="SUPFAM" id="SSF47266">
    <property type="entry name" value="4-helical cytokines"/>
    <property type="match status" value="1"/>
</dbReference>
<dbReference type="PROSITE" id="PS00266">
    <property type="entry name" value="SOMATOTROPIN_1"/>
    <property type="match status" value="1"/>
</dbReference>
<dbReference type="PROSITE" id="PS00338">
    <property type="entry name" value="SOMATOTROPIN_2"/>
    <property type="match status" value="1"/>
</dbReference>
<evidence type="ECO:0000250" key="1"/>
<evidence type="ECO:0000305" key="2"/>
<reference key="1">
    <citation type="journal article" date="1989" name="Mol. Endocrinol.">
        <title>Hamster placental lactogen-II contains a structural feature unique among the growth hormone-prolactin-placental lactogen family.</title>
        <authorList>
            <person name="Southard J.N."/>
            <person name="Do L."/>
            <person name="Smith W.C."/>
            <person name="Tacamantes F."/>
        </authorList>
    </citation>
    <scope>NUCLEOTIDE SEQUENCE [MRNA]</scope>
</reference>
<feature type="signal peptide">
    <location>
        <begin position="1"/>
        <end position="30"/>
    </location>
</feature>
<feature type="chain" id="PRO_0000032962" description="Prolactin-3B1">
    <location>
        <begin position="31"/>
        <end position="221"/>
    </location>
</feature>
<feature type="disulfide bond" evidence="1">
    <location>
        <begin position="81"/>
        <end position="196"/>
    </location>
</feature>
<feature type="disulfide bond" evidence="1">
    <location>
        <begin position="213"/>
        <end position="221"/>
    </location>
</feature>
<proteinExistence type="evidence at transcript level"/>
<sequence>MQLPLTPLSFSGTLLLMAMSNFLLWEHVTSSASPRLSTRNLYQRVVELSHCTHDLASKVFTDFNMKFGKSICRQKLMLYTCHTSSIPTPENREQVHQTNSEDLLKVTISVLQAWEEPVKHMVAAVAALPGTSDAMLSRAKELEERVLGLLEGLKIILNRIHPGAVENDYTFWSGWSDLQSSDEATRNIAFYTMGRCLRRDTHKVDNYLKVLKCRDIHNNNC</sequence>
<protein>
    <recommendedName>
        <fullName>Prolactin-3B1</fullName>
    </recommendedName>
    <alternativeName>
        <fullName>Chorionic somatomammotropin hormone 2</fullName>
    </alternativeName>
    <alternativeName>
        <fullName>Placental lactogen II</fullName>
        <shortName>PL-II</shortName>
    </alternativeName>
</protein>
<name>PR3B1_MESAU</name>
<organism>
    <name type="scientific">Mesocricetus auratus</name>
    <name type="common">Golden hamster</name>
    <dbReference type="NCBI Taxonomy" id="10036"/>
    <lineage>
        <taxon>Eukaryota</taxon>
        <taxon>Metazoa</taxon>
        <taxon>Chordata</taxon>
        <taxon>Craniata</taxon>
        <taxon>Vertebrata</taxon>
        <taxon>Euteleostomi</taxon>
        <taxon>Mammalia</taxon>
        <taxon>Eutheria</taxon>
        <taxon>Euarchontoglires</taxon>
        <taxon>Glires</taxon>
        <taxon>Rodentia</taxon>
        <taxon>Myomorpha</taxon>
        <taxon>Muroidea</taxon>
        <taxon>Cricetidae</taxon>
        <taxon>Cricetinae</taxon>
        <taxon>Mesocricetus</taxon>
    </lineage>
</organism>
<keyword id="KW-1015">Disulfide bond</keyword>
<keyword id="KW-0372">Hormone</keyword>
<keyword id="KW-1185">Reference proteome</keyword>
<keyword id="KW-0964">Secreted</keyword>
<keyword id="KW-0732">Signal</keyword>
<gene>
    <name type="primary">PRL3B1</name>
    <name type="synonym">CSH2</name>
</gene>